<keyword id="KW-0025">Alternative splicing</keyword>
<keyword id="KW-0328">Glycosyltransferase</keyword>
<keyword id="KW-0333">Golgi apparatus</keyword>
<keyword id="KW-0464">Manganese</keyword>
<keyword id="KW-0472">Membrane</keyword>
<keyword id="KW-1185">Reference proteome</keyword>
<keyword id="KW-0735">Signal-anchor</keyword>
<keyword id="KW-0808">Transferase</keyword>
<keyword id="KW-0812">Transmembrane</keyword>
<keyword id="KW-1133">Transmembrane helix</keyword>
<gene>
    <name evidence="4" type="primary">HPTG1</name>
    <name evidence="6" type="synonym">B3GALT11</name>
    <name type="ordered locus">At5g53340</name>
    <name type="ORF">K19E1.14</name>
</gene>
<comment type="function">
    <text evidence="3">Possesses hydroxyproline O-galactosyltransferase activity. Transfers galactose from UDP-galactose to hydroxyproline residues in the arabinogalactan proteins (AGPs). Is specific for AGPs containing non-contiguous peptidyl hydroxyproline residues. The addition of galactose onto the peptidyl hydroxyproline residues in AGP core proteins represents the first committed step in arabinogalactan polysaccharide addition. AGP glycans play essential roles in both vegetative and reproductive plant growth.</text>
</comment>
<comment type="cofactor">
    <cofactor evidence="1">
        <name>Mn(2+)</name>
        <dbReference type="ChEBI" id="CHEBI:29035"/>
    </cofactor>
</comment>
<comment type="pathway">
    <text evidence="5">Protein modification; protein glycosylation.</text>
</comment>
<comment type="subcellular location">
    <subcellularLocation>
        <location evidence="3">Golgi apparatus membrane</location>
        <topology evidence="5">Single-pass type II membrane protein</topology>
    </subcellularLocation>
</comment>
<comment type="alternative products">
    <event type="alternative splicing"/>
    <isoform>
        <id>Q94F27-1</id>
        <name>1</name>
        <sequence type="displayed"/>
    </isoform>
    <isoform>
        <id>Q94F27-2</id>
        <name>2</name>
        <sequence type="described" ref="VSP_036148"/>
    </isoform>
</comment>
<comment type="tissue specificity">
    <text evidence="3">Expressed in roots, rosette leaves, cauline leaves, stems, flowers and siliques.</text>
</comment>
<comment type="disruption phenotype">
    <text evidence="3">Reduced levels of arabinogalactan proteins.</text>
</comment>
<comment type="miscellaneous">
    <molecule>Isoform 2</molecule>
    <text evidence="5">May be due to a competing acceptor splice site.</text>
</comment>
<comment type="similarity">
    <text evidence="5">Belongs to the glycosyltransferase 31 family.</text>
</comment>
<comment type="sequence caution" evidence="5">
    <conflict type="erroneous gene model prediction">
        <sequence resource="EMBL-CDS" id="BAB09796"/>
    </conflict>
</comment>
<proteinExistence type="evidence at protein level"/>
<name>B3GTB_ARATH</name>
<sequence>MARKGSSIRLSSSRISTLLLFMFATFASFYVAGRLWQESQTRVHLINELDRVTGQGKSAISVDDTLKIIACREQKKTLAALEMELSSARQEGFVSKSPKLADGTETKKRPLVVIGIMTSLGNKKKRDAVRQAWMGTGASLKKLESEKGVIARFVIGRSANKGDSMDKSIDTENSQTDDFIILDDVVEAPEEASKKVKLFFAYAADRWDAQFYAKAIDNIYVNIDALGTTLAAHLENPRAYIGCMKSGEVFSEPNHKWYEPEWWKFGDKKAYFRHAYGEMYVITHALARFVSINRDILHSYAHDDVSTGSWFVGLDVKHVDEGKFCCSAWSSEAICAGV</sequence>
<feature type="chain" id="PRO_0000359421" description="Hydroxyproline O-galactosyltransferase HPGT1">
    <location>
        <begin position="1"/>
        <end position="338"/>
    </location>
</feature>
<feature type="topological domain" description="Cytoplasmic" evidence="5">
    <location>
        <begin position="1"/>
        <end position="12"/>
    </location>
</feature>
<feature type="transmembrane region" description="Helical; Signal-anchor for type II membrane protein" evidence="2">
    <location>
        <begin position="13"/>
        <end position="32"/>
    </location>
</feature>
<feature type="topological domain" description="Lumenal" evidence="5">
    <location>
        <begin position="33"/>
        <end position="338"/>
    </location>
</feature>
<feature type="splice variant" id="VSP_036148" description="In isoform 2." evidence="5">
    <location>
        <position position="332"/>
    </location>
</feature>
<reference key="1">
    <citation type="journal article" date="1998" name="DNA Res.">
        <title>Structural analysis of Arabidopsis thaliana chromosome 5. VI. Sequence features of the regions of 1,367,185 bp covered by 19 physically assigned P1 and TAC clones.</title>
        <authorList>
            <person name="Kotani H."/>
            <person name="Nakamura Y."/>
            <person name="Sato S."/>
            <person name="Asamizu E."/>
            <person name="Kaneko T."/>
            <person name="Miyajima N."/>
            <person name="Tabata S."/>
        </authorList>
    </citation>
    <scope>NUCLEOTIDE SEQUENCE [LARGE SCALE GENOMIC DNA]</scope>
    <source>
        <strain>cv. Columbia</strain>
    </source>
</reference>
<reference key="2">
    <citation type="journal article" date="2017" name="Plant J.">
        <title>Araport11: a complete reannotation of the Arabidopsis thaliana reference genome.</title>
        <authorList>
            <person name="Cheng C.Y."/>
            <person name="Krishnakumar V."/>
            <person name="Chan A.P."/>
            <person name="Thibaud-Nissen F."/>
            <person name="Schobel S."/>
            <person name="Town C.D."/>
        </authorList>
    </citation>
    <scope>GENOME REANNOTATION</scope>
    <source>
        <strain>cv. Columbia</strain>
    </source>
</reference>
<reference key="3">
    <citation type="journal article" date="2003" name="Science">
        <title>Empirical analysis of transcriptional activity in the Arabidopsis genome.</title>
        <authorList>
            <person name="Yamada K."/>
            <person name="Lim J."/>
            <person name="Dale J.M."/>
            <person name="Chen H."/>
            <person name="Shinn P."/>
            <person name="Palm C.J."/>
            <person name="Southwick A.M."/>
            <person name="Wu H.C."/>
            <person name="Kim C.J."/>
            <person name="Nguyen M."/>
            <person name="Pham P.K."/>
            <person name="Cheuk R.F."/>
            <person name="Karlin-Newmann G."/>
            <person name="Liu S.X."/>
            <person name="Lam B."/>
            <person name="Sakano H."/>
            <person name="Wu T."/>
            <person name="Yu G."/>
            <person name="Miranda M."/>
            <person name="Quach H.L."/>
            <person name="Tripp M."/>
            <person name="Chang C.H."/>
            <person name="Lee J.M."/>
            <person name="Toriumi M.J."/>
            <person name="Chan M.M."/>
            <person name="Tang C.C."/>
            <person name="Onodera C.S."/>
            <person name="Deng J.M."/>
            <person name="Akiyama K."/>
            <person name="Ansari Y."/>
            <person name="Arakawa T."/>
            <person name="Banh J."/>
            <person name="Banno F."/>
            <person name="Bowser L."/>
            <person name="Brooks S.Y."/>
            <person name="Carninci P."/>
            <person name="Chao Q."/>
            <person name="Choy N."/>
            <person name="Enju A."/>
            <person name="Goldsmith A.D."/>
            <person name="Gurjal M."/>
            <person name="Hansen N.F."/>
            <person name="Hayashizaki Y."/>
            <person name="Johnson-Hopson C."/>
            <person name="Hsuan V.W."/>
            <person name="Iida K."/>
            <person name="Karnes M."/>
            <person name="Khan S."/>
            <person name="Koesema E."/>
            <person name="Ishida J."/>
            <person name="Jiang P.X."/>
            <person name="Jones T."/>
            <person name="Kawai J."/>
            <person name="Kamiya A."/>
            <person name="Meyers C."/>
            <person name="Nakajima M."/>
            <person name="Narusaka M."/>
            <person name="Seki M."/>
            <person name="Sakurai T."/>
            <person name="Satou M."/>
            <person name="Tamse R."/>
            <person name="Vaysberg M."/>
            <person name="Wallender E.K."/>
            <person name="Wong C."/>
            <person name="Yamamura Y."/>
            <person name="Yuan S."/>
            <person name="Shinozaki K."/>
            <person name="Davis R.W."/>
            <person name="Theologis A."/>
            <person name="Ecker J.R."/>
        </authorList>
    </citation>
    <scope>NUCLEOTIDE SEQUENCE [LARGE SCALE MRNA] (ISOFORM 1)</scope>
    <source>
        <strain>cv. Columbia</strain>
    </source>
</reference>
<reference key="4">
    <citation type="journal article" date="2008" name="Plant Mol. Biol.">
        <title>Identification of a novel group of putative Arabidopsis thaliana beta-(1,3)-galactosyltransferases.</title>
        <authorList>
            <person name="Qu Y."/>
            <person name="Egelund J."/>
            <person name="Gilson P.R."/>
            <person name="Houghton F."/>
            <person name="Gleeson P.A."/>
            <person name="Schultz C.J."/>
            <person name="Bacic A."/>
        </authorList>
    </citation>
    <scope>GENE FAMILY</scope>
    <scope>NOMENCLATURE</scope>
</reference>
<reference key="5">
    <citation type="journal article" date="2015" name="Plant J.">
        <title>Identification of three potent hydroxyproline O-galactosyltransferases in Arabidopsis.</title>
        <authorList>
            <person name="Ogawa-Ohnishi M."/>
            <person name="Matsubayashi Y."/>
        </authorList>
    </citation>
    <scope>IDENTIFICATION BY MASS SPECTROMETRY</scope>
    <scope>FUNCTION</scope>
    <scope>SUBCELLULAR LOCATION</scope>
    <scope>TISSUE SPECIFICITY</scope>
    <scope>DISRUPTION PHENOTYPE</scope>
</reference>
<accession>Q94F27</accession>
<accession>Q2V2Z0</accession>
<accession>Q9FK08</accession>
<protein>
    <recommendedName>
        <fullName evidence="4">Hydroxyproline O-galactosyltransferase HPGT1</fullName>
        <ecNumber evidence="3">2.4.1.-</ecNumber>
    </recommendedName>
    <alternativeName>
        <fullName evidence="5">Beta-1,3-galactosyltransferase 11</fullName>
    </alternativeName>
</protein>
<evidence type="ECO:0000250" key="1">
    <source>
        <dbReference type="UniProtKB" id="A7XDQ9"/>
    </source>
</evidence>
<evidence type="ECO:0000255" key="2"/>
<evidence type="ECO:0000269" key="3">
    <source>
    </source>
</evidence>
<evidence type="ECO:0000303" key="4">
    <source>
    </source>
</evidence>
<evidence type="ECO:0000305" key="5"/>
<evidence type="ECO:0000305" key="6">
    <source>
    </source>
</evidence>
<dbReference type="EC" id="2.4.1.-" evidence="3"/>
<dbReference type="EMBL" id="AB013388">
    <property type="protein sequence ID" value="BAB09796.1"/>
    <property type="status" value="ALT_SEQ"/>
    <property type="molecule type" value="Genomic_DNA"/>
</dbReference>
<dbReference type="EMBL" id="CP002688">
    <property type="protein sequence ID" value="AED96341.1"/>
    <property type="molecule type" value="Genomic_DNA"/>
</dbReference>
<dbReference type="EMBL" id="CP002688">
    <property type="protein sequence ID" value="AED96342.1"/>
    <property type="molecule type" value="Genomic_DNA"/>
</dbReference>
<dbReference type="EMBL" id="AF386942">
    <property type="protein sequence ID" value="AAK62387.1"/>
    <property type="molecule type" value="mRNA"/>
</dbReference>
<dbReference type="EMBL" id="AY081533">
    <property type="protein sequence ID" value="AAM10095.1"/>
    <property type="molecule type" value="mRNA"/>
</dbReference>
<dbReference type="RefSeq" id="NP_001032067.1">
    <molecule id="Q94F27-2"/>
    <property type="nucleotide sequence ID" value="NM_001036990.2"/>
</dbReference>
<dbReference type="RefSeq" id="NP_568791.1">
    <molecule id="Q94F27-1"/>
    <property type="nucleotide sequence ID" value="NM_124713.4"/>
</dbReference>
<dbReference type="SMR" id="Q94F27"/>
<dbReference type="FunCoup" id="Q94F27">
    <property type="interactions" value="2999"/>
</dbReference>
<dbReference type="STRING" id="3702.Q94F27"/>
<dbReference type="CAZy" id="GT31">
    <property type="family name" value="Glycosyltransferase Family 31"/>
</dbReference>
<dbReference type="PaxDb" id="3702-AT5G53340.1"/>
<dbReference type="ProteomicsDB" id="241182">
    <molecule id="Q94F27-1"/>
</dbReference>
<dbReference type="EnsemblPlants" id="AT5G53340.1">
    <molecule id="Q94F27-1"/>
    <property type="protein sequence ID" value="AT5G53340.1"/>
    <property type="gene ID" value="AT5G53340"/>
</dbReference>
<dbReference type="EnsemblPlants" id="AT5G53340.2">
    <molecule id="Q94F27-2"/>
    <property type="protein sequence ID" value="AT5G53340.2"/>
    <property type="gene ID" value="AT5G53340"/>
</dbReference>
<dbReference type="GeneID" id="835415"/>
<dbReference type="Gramene" id="AT5G53340.1">
    <molecule id="Q94F27-1"/>
    <property type="protein sequence ID" value="AT5G53340.1"/>
    <property type="gene ID" value="AT5G53340"/>
</dbReference>
<dbReference type="Gramene" id="AT5G53340.2">
    <molecule id="Q94F27-2"/>
    <property type="protein sequence ID" value="AT5G53340.2"/>
    <property type="gene ID" value="AT5G53340"/>
</dbReference>
<dbReference type="KEGG" id="ath:AT5G53340"/>
<dbReference type="Araport" id="AT5G53340"/>
<dbReference type="TAIR" id="AT5G53340">
    <property type="gene designation" value="HPGT1"/>
</dbReference>
<dbReference type="eggNOG" id="KOG2288">
    <property type="taxonomic scope" value="Eukaryota"/>
</dbReference>
<dbReference type="InParanoid" id="Q94F27"/>
<dbReference type="OMA" id="KEHWDKP"/>
<dbReference type="PhylomeDB" id="Q94F27"/>
<dbReference type="UniPathway" id="UPA00378"/>
<dbReference type="PRO" id="PR:Q94F27"/>
<dbReference type="Proteomes" id="UP000006548">
    <property type="component" value="Chromosome 5"/>
</dbReference>
<dbReference type="ExpressionAtlas" id="Q94F27">
    <property type="expression patterns" value="baseline and differential"/>
</dbReference>
<dbReference type="GO" id="GO:0005768">
    <property type="term" value="C:endosome"/>
    <property type="evidence" value="ECO:0007005"/>
    <property type="project" value="TAIR"/>
</dbReference>
<dbReference type="GO" id="GO:0005794">
    <property type="term" value="C:Golgi apparatus"/>
    <property type="evidence" value="ECO:0007005"/>
    <property type="project" value="TAIR"/>
</dbReference>
<dbReference type="GO" id="GO:0005797">
    <property type="term" value="C:Golgi medial cisterna"/>
    <property type="evidence" value="ECO:0007005"/>
    <property type="project" value="TAIR"/>
</dbReference>
<dbReference type="GO" id="GO:0000139">
    <property type="term" value="C:Golgi membrane"/>
    <property type="evidence" value="ECO:0007669"/>
    <property type="project" value="UniProtKB-SubCell"/>
</dbReference>
<dbReference type="GO" id="GO:0005802">
    <property type="term" value="C:trans-Golgi network"/>
    <property type="evidence" value="ECO:0007005"/>
    <property type="project" value="TAIR"/>
</dbReference>
<dbReference type="GO" id="GO:1990714">
    <property type="term" value="F:hydroxyproline O-galactosyltransferase activity"/>
    <property type="evidence" value="ECO:0000314"/>
    <property type="project" value="TAIR"/>
</dbReference>
<dbReference type="GO" id="GO:0010405">
    <property type="term" value="P:arabinogalactan protein metabolic process"/>
    <property type="evidence" value="ECO:0000315"/>
    <property type="project" value="UniProtKB"/>
</dbReference>
<dbReference type="GO" id="GO:0018258">
    <property type="term" value="P:protein O-linked glycosylation via hydroxyproline"/>
    <property type="evidence" value="ECO:0000314"/>
    <property type="project" value="UniProtKB"/>
</dbReference>
<dbReference type="FunFam" id="3.90.550.50:FF:000022">
    <property type="entry name" value="Hexosyltransferase"/>
    <property type="match status" value="1"/>
</dbReference>
<dbReference type="Gene3D" id="3.90.550.50">
    <property type="match status" value="1"/>
</dbReference>
<dbReference type="InterPro" id="IPR025298">
    <property type="entry name" value="DUF4094"/>
</dbReference>
<dbReference type="InterPro" id="IPR002659">
    <property type="entry name" value="Glyco_trans_31"/>
</dbReference>
<dbReference type="PANTHER" id="PTHR11214">
    <property type="entry name" value="BETA-1,3-N-ACETYLGLUCOSAMINYLTRANSFERASE"/>
    <property type="match status" value="1"/>
</dbReference>
<dbReference type="PANTHER" id="PTHR11214:SF74">
    <property type="entry name" value="HYDROXYPROLINE O-GALACTOSYLTRANSFERASE HPGT1"/>
    <property type="match status" value="1"/>
</dbReference>
<dbReference type="Pfam" id="PF13334">
    <property type="entry name" value="DUF4094"/>
    <property type="match status" value="1"/>
</dbReference>
<dbReference type="Pfam" id="PF01762">
    <property type="entry name" value="Galactosyl_T"/>
    <property type="match status" value="1"/>
</dbReference>
<organism>
    <name type="scientific">Arabidopsis thaliana</name>
    <name type="common">Mouse-ear cress</name>
    <dbReference type="NCBI Taxonomy" id="3702"/>
    <lineage>
        <taxon>Eukaryota</taxon>
        <taxon>Viridiplantae</taxon>
        <taxon>Streptophyta</taxon>
        <taxon>Embryophyta</taxon>
        <taxon>Tracheophyta</taxon>
        <taxon>Spermatophyta</taxon>
        <taxon>Magnoliopsida</taxon>
        <taxon>eudicotyledons</taxon>
        <taxon>Gunneridae</taxon>
        <taxon>Pentapetalae</taxon>
        <taxon>rosids</taxon>
        <taxon>malvids</taxon>
        <taxon>Brassicales</taxon>
        <taxon>Brassicaceae</taxon>
        <taxon>Camelineae</taxon>
        <taxon>Arabidopsis</taxon>
    </lineage>
</organism>